<feature type="chain" id="PRO_0000339730" description="Xanthine phosphoribosyltransferase">
    <location>
        <begin position="1"/>
        <end position="190"/>
    </location>
</feature>
<feature type="binding site" evidence="1">
    <location>
        <position position="20"/>
    </location>
    <ligand>
        <name>xanthine</name>
        <dbReference type="ChEBI" id="CHEBI:17712"/>
    </ligand>
</feature>
<feature type="binding site" evidence="1">
    <location>
        <position position="27"/>
    </location>
    <ligand>
        <name>xanthine</name>
        <dbReference type="ChEBI" id="CHEBI:17712"/>
    </ligand>
</feature>
<feature type="binding site" evidence="1">
    <location>
        <begin position="128"/>
        <end position="132"/>
    </location>
    <ligand>
        <name>5-phospho-alpha-D-ribose 1-diphosphate</name>
        <dbReference type="ChEBI" id="CHEBI:58017"/>
    </ligand>
</feature>
<feature type="binding site" evidence="1">
    <location>
        <position position="156"/>
    </location>
    <ligand>
        <name>xanthine</name>
        <dbReference type="ChEBI" id="CHEBI:17712"/>
    </ligand>
</feature>
<comment type="function">
    <text evidence="1">Converts the preformed base xanthine, a product of nucleic acid breakdown, to xanthosine 5'-monophosphate (XMP), so it can be reused for RNA or DNA synthesis.</text>
</comment>
<comment type="catalytic activity">
    <reaction evidence="1">
        <text>XMP + diphosphate = xanthine + 5-phospho-alpha-D-ribose 1-diphosphate</text>
        <dbReference type="Rhea" id="RHEA:10800"/>
        <dbReference type="ChEBI" id="CHEBI:17712"/>
        <dbReference type="ChEBI" id="CHEBI:33019"/>
        <dbReference type="ChEBI" id="CHEBI:57464"/>
        <dbReference type="ChEBI" id="CHEBI:58017"/>
        <dbReference type="EC" id="2.4.2.22"/>
    </reaction>
</comment>
<comment type="pathway">
    <text evidence="1">Purine metabolism; XMP biosynthesis via salvage pathway; XMP from xanthine: step 1/1.</text>
</comment>
<comment type="subunit">
    <text evidence="1">Homodimer.</text>
</comment>
<comment type="subcellular location">
    <subcellularLocation>
        <location evidence="1">Cytoplasm</location>
    </subcellularLocation>
</comment>
<comment type="similarity">
    <text evidence="1">Belongs to the purine/pyrimidine phosphoribosyltransferase family. Xpt subfamily.</text>
</comment>
<organism>
    <name type="scientific">Pseudomonas entomophila (strain L48)</name>
    <dbReference type="NCBI Taxonomy" id="384676"/>
    <lineage>
        <taxon>Bacteria</taxon>
        <taxon>Pseudomonadati</taxon>
        <taxon>Pseudomonadota</taxon>
        <taxon>Gammaproteobacteria</taxon>
        <taxon>Pseudomonadales</taxon>
        <taxon>Pseudomonadaceae</taxon>
        <taxon>Pseudomonas</taxon>
    </lineage>
</organism>
<protein>
    <recommendedName>
        <fullName evidence="1">Xanthine phosphoribosyltransferase</fullName>
        <shortName evidence="1">XPRTase</shortName>
        <ecNumber evidence="1">2.4.2.22</ecNumber>
    </recommendedName>
</protein>
<evidence type="ECO:0000255" key="1">
    <source>
        <dbReference type="HAMAP-Rule" id="MF_01184"/>
    </source>
</evidence>
<dbReference type="EC" id="2.4.2.22" evidence="1"/>
<dbReference type="EMBL" id="CT573326">
    <property type="protein sequence ID" value="CAK18025.1"/>
    <property type="molecule type" value="Genomic_DNA"/>
</dbReference>
<dbReference type="RefSeq" id="WP_011536381.1">
    <property type="nucleotide sequence ID" value="NC_008027.1"/>
</dbReference>
<dbReference type="SMR" id="Q1I2W1"/>
<dbReference type="STRING" id="384676.PSEEN5411"/>
<dbReference type="KEGG" id="pen:PSEEN5411"/>
<dbReference type="eggNOG" id="COG0503">
    <property type="taxonomic scope" value="Bacteria"/>
</dbReference>
<dbReference type="HOGENOM" id="CLU_099015_0_0_6"/>
<dbReference type="OrthoDB" id="9790678at2"/>
<dbReference type="UniPathway" id="UPA00602">
    <property type="reaction ID" value="UER00658"/>
</dbReference>
<dbReference type="Proteomes" id="UP000000658">
    <property type="component" value="Chromosome"/>
</dbReference>
<dbReference type="GO" id="GO:0005737">
    <property type="term" value="C:cytoplasm"/>
    <property type="evidence" value="ECO:0007669"/>
    <property type="project" value="UniProtKB-SubCell"/>
</dbReference>
<dbReference type="GO" id="GO:0000310">
    <property type="term" value="F:xanthine phosphoribosyltransferase activity"/>
    <property type="evidence" value="ECO:0007669"/>
    <property type="project" value="UniProtKB-UniRule"/>
</dbReference>
<dbReference type="GO" id="GO:0006166">
    <property type="term" value="P:purine ribonucleoside salvage"/>
    <property type="evidence" value="ECO:0007669"/>
    <property type="project" value="UniProtKB-KW"/>
</dbReference>
<dbReference type="GO" id="GO:0046110">
    <property type="term" value="P:xanthine metabolic process"/>
    <property type="evidence" value="ECO:0007669"/>
    <property type="project" value="InterPro"/>
</dbReference>
<dbReference type="GO" id="GO:0032265">
    <property type="term" value="P:XMP salvage"/>
    <property type="evidence" value="ECO:0007669"/>
    <property type="project" value="UniProtKB-UniRule"/>
</dbReference>
<dbReference type="CDD" id="cd06223">
    <property type="entry name" value="PRTases_typeI"/>
    <property type="match status" value="1"/>
</dbReference>
<dbReference type="FunFam" id="3.40.50.2020:FF:000027">
    <property type="entry name" value="Xanthine phosphoribosyltransferase"/>
    <property type="match status" value="1"/>
</dbReference>
<dbReference type="Gene3D" id="3.40.50.2020">
    <property type="match status" value="1"/>
</dbReference>
<dbReference type="HAMAP" id="MF_01184">
    <property type="entry name" value="XPRTase"/>
    <property type="match status" value="1"/>
</dbReference>
<dbReference type="InterPro" id="IPR000836">
    <property type="entry name" value="PRibTrfase_dom"/>
</dbReference>
<dbReference type="InterPro" id="IPR029057">
    <property type="entry name" value="PRTase-like"/>
</dbReference>
<dbReference type="InterPro" id="IPR050118">
    <property type="entry name" value="Pur/Pyrimidine_PRTase"/>
</dbReference>
<dbReference type="InterPro" id="IPR010079">
    <property type="entry name" value="Xanthine_PRibTrfase"/>
</dbReference>
<dbReference type="NCBIfam" id="NF006671">
    <property type="entry name" value="PRK09219.1"/>
    <property type="match status" value="1"/>
</dbReference>
<dbReference type="NCBIfam" id="TIGR01744">
    <property type="entry name" value="XPRTase"/>
    <property type="match status" value="1"/>
</dbReference>
<dbReference type="PANTHER" id="PTHR43864">
    <property type="entry name" value="HYPOXANTHINE/GUANINE PHOSPHORIBOSYLTRANSFERASE"/>
    <property type="match status" value="1"/>
</dbReference>
<dbReference type="PANTHER" id="PTHR43864:SF1">
    <property type="entry name" value="XANTHINE PHOSPHORIBOSYLTRANSFERASE"/>
    <property type="match status" value="1"/>
</dbReference>
<dbReference type="SUPFAM" id="SSF53271">
    <property type="entry name" value="PRTase-like"/>
    <property type="match status" value="1"/>
</dbReference>
<sequence>MEALQQKIREEGIVLSDQVLKVDAFLNHQIDPALMQLIGDEFARLFADSGVTKIVTIEASGIAPAVMTGLKLGVPVIFARKHQSLTLTENLLTASVYSFTKQTENTVAISPRHLNSSDRVLVIDDFLANGKASQALISIIKQAGATVAGLGIVIEKSFQGGRAELDSQGYRVESLARVKSLEGGVVTFIE</sequence>
<reference key="1">
    <citation type="journal article" date="2006" name="Nat. Biotechnol.">
        <title>Complete genome sequence of the entomopathogenic and metabolically versatile soil bacterium Pseudomonas entomophila.</title>
        <authorList>
            <person name="Vodovar N."/>
            <person name="Vallenet D."/>
            <person name="Cruveiller S."/>
            <person name="Rouy Z."/>
            <person name="Barbe V."/>
            <person name="Acosta C."/>
            <person name="Cattolico L."/>
            <person name="Jubin C."/>
            <person name="Lajus A."/>
            <person name="Segurens B."/>
            <person name="Vacherie B."/>
            <person name="Wincker P."/>
            <person name="Weissenbach J."/>
            <person name="Lemaitre B."/>
            <person name="Medigue C."/>
            <person name="Boccard F."/>
        </authorList>
    </citation>
    <scope>NUCLEOTIDE SEQUENCE [LARGE SCALE GENOMIC DNA]</scope>
    <source>
        <strain>L48</strain>
    </source>
</reference>
<gene>
    <name evidence="1" type="primary">xpt</name>
    <name type="ordered locus">PSEEN5411</name>
</gene>
<keyword id="KW-0963">Cytoplasm</keyword>
<keyword id="KW-0328">Glycosyltransferase</keyword>
<keyword id="KW-0660">Purine salvage</keyword>
<keyword id="KW-0808">Transferase</keyword>
<name>XPT_PSEE4</name>
<accession>Q1I2W1</accession>
<proteinExistence type="inferred from homology"/>